<organism>
    <name type="scientific">Pseudomonas aeruginosa (strain ATCC 15692 / DSM 22644 / CIP 104116 / JCM 14847 / LMG 12228 / 1C / PRS 101 / PAO1)</name>
    <dbReference type="NCBI Taxonomy" id="208964"/>
    <lineage>
        <taxon>Bacteria</taxon>
        <taxon>Pseudomonadati</taxon>
        <taxon>Pseudomonadota</taxon>
        <taxon>Gammaproteobacteria</taxon>
        <taxon>Pseudomonadales</taxon>
        <taxon>Pseudomonadaceae</taxon>
        <taxon>Pseudomonas</taxon>
    </lineage>
</organism>
<reference key="1">
    <citation type="journal article" date="2000" name="Nature">
        <title>Complete genome sequence of Pseudomonas aeruginosa PAO1, an opportunistic pathogen.</title>
        <authorList>
            <person name="Stover C.K."/>
            <person name="Pham X.-Q.T."/>
            <person name="Erwin A.L."/>
            <person name="Mizoguchi S.D."/>
            <person name="Warrener P."/>
            <person name="Hickey M.J."/>
            <person name="Brinkman F.S.L."/>
            <person name="Hufnagle W.O."/>
            <person name="Kowalik D.J."/>
            <person name="Lagrou M."/>
            <person name="Garber R.L."/>
            <person name="Goltry L."/>
            <person name="Tolentino E."/>
            <person name="Westbrock-Wadman S."/>
            <person name="Yuan Y."/>
            <person name="Brody L.L."/>
            <person name="Coulter S.N."/>
            <person name="Folger K.R."/>
            <person name="Kas A."/>
            <person name="Larbig K."/>
            <person name="Lim R.M."/>
            <person name="Smith K.A."/>
            <person name="Spencer D.H."/>
            <person name="Wong G.K.-S."/>
            <person name="Wu Z."/>
            <person name="Paulsen I.T."/>
            <person name="Reizer J."/>
            <person name="Saier M.H. Jr."/>
            <person name="Hancock R.E.W."/>
            <person name="Lory S."/>
            <person name="Olson M.V."/>
        </authorList>
    </citation>
    <scope>NUCLEOTIDE SEQUENCE [LARGE SCALE GENOMIC DNA]</scope>
    <source>
        <strain>ATCC 15692 / DSM 22644 / CIP 104116 / JCM 14847 / LMG 12228 / 1C / PRS 101 / PAO1</strain>
    </source>
</reference>
<comment type="function">
    <text evidence="1">Topoisomerase IV is essential for chromosome segregation. It relaxes supercoiled DNA. Performs the decatenation events required during the replication of a circular DNA molecule.</text>
</comment>
<comment type="catalytic activity">
    <reaction evidence="1">
        <text>ATP-dependent breakage, passage and rejoining of double-stranded DNA.</text>
        <dbReference type="EC" id="5.6.2.2"/>
    </reaction>
</comment>
<comment type="cofactor">
    <cofactor evidence="1">
        <name>Mg(2+)</name>
        <dbReference type="ChEBI" id="CHEBI:18420"/>
    </cofactor>
    <cofactor evidence="1">
        <name>Mn(2+)</name>
        <dbReference type="ChEBI" id="CHEBI:29035"/>
    </cofactor>
    <cofactor evidence="1">
        <name>Ca(2+)</name>
        <dbReference type="ChEBI" id="CHEBI:29108"/>
    </cofactor>
    <text evidence="1">Binds two Mg(2+) per subunit. The magnesium ions form salt bridges with both the protein and the DNA. Can also accept other divalent metal cations, such as Mn(2+) or Ca(2+).</text>
</comment>
<comment type="subunit">
    <text evidence="1">Heterotetramer composed of ParC and ParE.</text>
</comment>
<comment type="similarity">
    <text evidence="1">Belongs to the type II topoisomerase family. ParE type 1 subfamily.</text>
</comment>
<gene>
    <name evidence="1" type="primary">parE</name>
    <name type="ordered locus">PA4967</name>
</gene>
<accession>Q9HUJ8</accession>
<protein>
    <recommendedName>
        <fullName evidence="1">DNA topoisomerase 4 subunit B</fullName>
        <ecNumber evidence="1">5.6.2.2</ecNumber>
    </recommendedName>
    <alternativeName>
        <fullName evidence="1">Topoisomerase IV subunit B</fullName>
    </alternativeName>
</protein>
<name>PARE_PSEAE</name>
<sequence length="629" mass="69179">MATYNADAIEVLSGLDPVRKRPGMYTDTTRPNHLAQEVIDNSVDEALAGHAKSVQVILHQDNSLEVIDDGRGMPVDIHPEEGVPGVELILTKLHAGGKFSNKNYQFSGGLHGVGISVVNALSTRVEVRVKRDANEYRMTFADGFKDSDLEVIGTVGKRNTGTSVHFWPDPKYFDSAKFSVSRLKHVLKAKAVLCPGLSVVFEDKNTGERVEWHFEDGLRSYLTDAVAELPRLPDEPFCGNLEGSKEAVSWALLWLPEGGESVQESYVNLIPTAQGGTHVNGLRQGLLDAMREFCEFRNLLPRGVKLAPEDVWERIAFVLSMKMQEPQFSGQTKERLSSREAAAFVSGVVKDAFSLWLNEHAEIGLQLAELAISNAGRRLKAGKKVERKKITQGPALPGKLADCAGQEPMRAELFLVEGDSAGGSAKQARDKEFQAIMPLRGKILNTWEVDGGEVLASQEVHDIAVAIGVDPGASDLAQLRYGKICILADADSDGLHIATLLCALFVRHFRPLVEAGHVYVAMPPLYRIDLGKDIYYALDEAERDGILERLAAEKKRGKPQVTRFKGLGEMNPLQLRETTMDPNTRRLVQLTLEDATGTLEIMDMLLAKKRAGDRKSWLESKGNLAEVLV</sequence>
<evidence type="ECO:0000255" key="1">
    <source>
        <dbReference type="HAMAP-Rule" id="MF_00938"/>
    </source>
</evidence>
<proteinExistence type="inferred from homology"/>
<feature type="chain" id="PRO_0000287822" description="DNA topoisomerase 4 subunit B">
    <location>
        <begin position="1"/>
        <end position="629"/>
    </location>
</feature>
<feature type="domain" description="Toprim" evidence="1">
    <location>
        <begin position="411"/>
        <end position="524"/>
    </location>
</feature>
<feature type="binding site" evidence="1">
    <location>
        <position position="4"/>
    </location>
    <ligand>
        <name>ATP</name>
        <dbReference type="ChEBI" id="CHEBI:30616"/>
    </ligand>
</feature>
<feature type="binding site" evidence="1">
    <location>
        <position position="41"/>
    </location>
    <ligand>
        <name>ATP</name>
        <dbReference type="ChEBI" id="CHEBI:30616"/>
    </ligand>
</feature>
<feature type="binding site" evidence="1">
    <location>
        <position position="68"/>
    </location>
    <ligand>
        <name>ATP</name>
        <dbReference type="ChEBI" id="CHEBI:30616"/>
    </ligand>
</feature>
<feature type="binding site" evidence="1">
    <location>
        <begin position="109"/>
        <end position="115"/>
    </location>
    <ligand>
        <name>ATP</name>
        <dbReference type="ChEBI" id="CHEBI:30616"/>
    </ligand>
</feature>
<feature type="binding site" evidence="1">
    <location>
        <position position="333"/>
    </location>
    <ligand>
        <name>ATP</name>
        <dbReference type="ChEBI" id="CHEBI:30616"/>
    </ligand>
</feature>
<feature type="binding site" evidence="1">
    <location>
        <position position="417"/>
    </location>
    <ligand>
        <name>Mg(2+)</name>
        <dbReference type="ChEBI" id="CHEBI:18420"/>
        <label>1</label>
        <note>catalytic</note>
    </ligand>
</feature>
<feature type="binding site" evidence="1">
    <location>
        <position position="489"/>
    </location>
    <ligand>
        <name>Mg(2+)</name>
        <dbReference type="ChEBI" id="CHEBI:18420"/>
        <label>1</label>
        <note>catalytic</note>
    </ligand>
</feature>
<feature type="binding site" evidence="1">
    <location>
        <position position="489"/>
    </location>
    <ligand>
        <name>Mg(2+)</name>
        <dbReference type="ChEBI" id="CHEBI:18420"/>
        <label>2</label>
    </ligand>
</feature>
<feature type="binding site" evidence="1">
    <location>
        <position position="491"/>
    </location>
    <ligand>
        <name>Mg(2+)</name>
        <dbReference type="ChEBI" id="CHEBI:18420"/>
        <label>2</label>
    </ligand>
</feature>
<feature type="site" description="Interaction with DNA" evidence="1">
    <location>
        <position position="442"/>
    </location>
</feature>
<feature type="site" description="Interaction with DNA" evidence="1">
    <location>
        <position position="445"/>
    </location>
</feature>
<feature type="site" description="Interaction with DNA" evidence="1">
    <location>
        <position position="496"/>
    </location>
</feature>
<feature type="site" description="Interaction with DNA" evidence="1">
    <location>
        <position position="614"/>
    </location>
</feature>
<dbReference type="EC" id="5.6.2.2" evidence="1"/>
<dbReference type="EMBL" id="AE004091">
    <property type="protein sequence ID" value="AAG08352.1"/>
    <property type="molecule type" value="Genomic_DNA"/>
</dbReference>
<dbReference type="PIR" id="B83026">
    <property type="entry name" value="B83026"/>
</dbReference>
<dbReference type="RefSeq" id="NP_253654.1">
    <property type="nucleotide sequence ID" value="NC_002516.2"/>
</dbReference>
<dbReference type="RefSeq" id="WP_003102062.1">
    <property type="nucleotide sequence ID" value="NZ_QZGE01000002.1"/>
</dbReference>
<dbReference type="SMR" id="Q9HUJ8"/>
<dbReference type="FunCoup" id="Q9HUJ8">
    <property type="interactions" value="153"/>
</dbReference>
<dbReference type="STRING" id="208964.PA4967"/>
<dbReference type="ChEMBL" id="CHEMBL3390827"/>
<dbReference type="PaxDb" id="208964-PA4967"/>
<dbReference type="GeneID" id="879897"/>
<dbReference type="KEGG" id="pae:PA4967"/>
<dbReference type="PATRIC" id="fig|208964.12.peg.5201"/>
<dbReference type="PseudoCAP" id="PA4967"/>
<dbReference type="HOGENOM" id="CLU_006146_1_0_6"/>
<dbReference type="InParanoid" id="Q9HUJ8"/>
<dbReference type="OrthoDB" id="9802808at2"/>
<dbReference type="PhylomeDB" id="Q9HUJ8"/>
<dbReference type="BioCyc" id="PAER208964:G1FZ6-5083-MONOMER"/>
<dbReference type="Proteomes" id="UP000002438">
    <property type="component" value="Chromosome"/>
</dbReference>
<dbReference type="GO" id="GO:0005694">
    <property type="term" value="C:chromosome"/>
    <property type="evidence" value="ECO:0007669"/>
    <property type="project" value="InterPro"/>
</dbReference>
<dbReference type="GO" id="GO:0009340">
    <property type="term" value="C:DNA topoisomerase IV complex"/>
    <property type="evidence" value="ECO:0000314"/>
    <property type="project" value="PseudoCAP"/>
</dbReference>
<dbReference type="GO" id="GO:0005524">
    <property type="term" value="F:ATP binding"/>
    <property type="evidence" value="ECO:0007669"/>
    <property type="project" value="UniProtKB-UniRule"/>
</dbReference>
<dbReference type="GO" id="GO:0003677">
    <property type="term" value="F:DNA binding"/>
    <property type="evidence" value="ECO:0007669"/>
    <property type="project" value="UniProtKB-UniRule"/>
</dbReference>
<dbReference type="GO" id="GO:0003918">
    <property type="term" value="F:DNA topoisomerase type II (double strand cut, ATP-hydrolyzing) activity"/>
    <property type="evidence" value="ECO:0000314"/>
    <property type="project" value="PseudoCAP"/>
</dbReference>
<dbReference type="GO" id="GO:0046872">
    <property type="term" value="F:metal ion binding"/>
    <property type="evidence" value="ECO:0007669"/>
    <property type="project" value="UniProtKB-KW"/>
</dbReference>
<dbReference type="GO" id="GO:0007059">
    <property type="term" value="P:chromosome segregation"/>
    <property type="evidence" value="ECO:0007669"/>
    <property type="project" value="UniProtKB-UniRule"/>
</dbReference>
<dbReference type="GO" id="GO:0006265">
    <property type="term" value="P:DNA topological change"/>
    <property type="evidence" value="ECO:0000314"/>
    <property type="project" value="PseudoCAP"/>
</dbReference>
<dbReference type="CDD" id="cd16928">
    <property type="entry name" value="HATPase_GyrB-like"/>
    <property type="match status" value="1"/>
</dbReference>
<dbReference type="CDD" id="cd00822">
    <property type="entry name" value="TopoII_Trans_DNA_gyrase"/>
    <property type="match status" value="1"/>
</dbReference>
<dbReference type="FunFam" id="3.30.565.10:FF:000002">
    <property type="entry name" value="DNA gyrase subunit B"/>
    <property type="match status" value="1"/>
</dbReference>
<dbReference type="FunFam" id="3.30.230.10:FF:000012">
    <property type="entry name" value="DNA topoisomerase 4 subunit B"/>
    <property type="match status" value="1"/>
</dbReference>
<dbReference type="FunFam" id="3.40.50.670:FF:000003">
    <property type="entry name" value="DNA topoisomerase 4 subunit B"/>
    <property type="match status" value="1"/>
</dbReference>
<dbReference type="Gene3D" id="3.30.230.10">
    <property type="match status" value="1"/>
</dbReference>
<dbReference type="Gene3D" id="3.40.50.670">
    <property type="match status" value="1"/>
</dbReference>
<dbReference type="Gene3D" id="3.30.565.10">
    <property type="entry name" value="Histidine kinase-like ATPase, C-terminal domain"/>
    <property type="match status" value="1"/>
</dbReference>
<dbReference type="HAMAP" id="MF_00938">
    <property type="entry name" value="ParE_type1"/>
    <property type="match status" value="1"/>
</dbReference>
<dbReference type="InterPro" id="IPR002288">
    <property type="entry name" value="DNA_gyrase_B_C"/>
</dbReference>
<dbReference type="InterPro" id="IPR036890">
    <property type="entry name" value="HATPase_C_sf"/>
</dbReference>
<dbReference type="InterPro" id="IPR020568">
    <property type="entry name" value="Ribosomal_Su5_D2-typ_SF"/>
</dbReference>
<dbReference type="InterPro" id="IPR014721">
    <property type="entry name" value="Ribsml_uS5_D2-typ_fold_subgr"/>
</dbReference>
<dbReference type="InterPro" id="IPR001241">
    <property type="entry name" value="Topo_IIA"/>
</dbReference>
<dbReference type="InterPro" id="IPR013760">
    <property type="entry name" value="Topo_IIA-like_dom_sf"/>
</dbReference>
<dbReference type="InterPro" id="IPR013759">
    <property type="entry name" value="Topo_IIA_B_C"/>
</dbReference>
<dbReference type="InterPro" id="IPR013506">
    <property type="entry name" value="Topo_IIA_bsu_dom2"/>
</dbReference>
<dbReference type="InterPro" id="IPR018522">
    <property type="entry name" value="TopoIIA_CS"/>
</dbReference>
<dbReference type="InterPro" id="IPR005737">
    <property type="entry name" value="TopoIV_B_Gneg"/>
</dbReference>
<dbReference type="InterPro" id="IPR006171">
    <property type="entry name" value="TOPRIM_dom"/>
</dbReference>
<dbReference type="NCBIfam" id="TIGR01055">
    <property type="entry name" value="parE_Gneg"/>
    <property type="match status" value="1"/>
</dbReference>
<dbReference type="PANTHER" id="PTHR45866">
    <property type="entry name" value="DNA GYRASE/TOPOISOMERASE SUBUNIT B"/>
    <property type="match status" value="1"/>
</dbReference>
<dbReference type="PANTHER" id="PTHR45866:SF4">
    <property type="entry name" value="DNA TOPOISOMERASE 4 SUBUNIT B"/>
    <property type="match status" value="1"/>
</dbReference>
<dbReference type="Pfam" id="PF00204">
    <property type="entry name" value="DNA_gyraseB"/>
    <property type="match status" value="1"/>
</dbReference>
<dbReference type="Pfam" id="PF00986">
    <property type="entry name" value="DNA_gyraseB_C"/>
    <property type="match status" value="1"/>
</dbReference>
<dbReference type="Pfam" id="PF02518">
    <property type="entry name" value="HATPase_c"/>
    <property type="match status" value="1"/>
</dbReference>
<dbReference type="Pfam" id="PF01751">
    <property type="entry name" value="Toprim"/>
    <property type="match status" value="1"/>
</dbReference>
<dbReference type="PRINTS" id="PR01098">
    <property type="entry name" value="TOPISMRASE4B"/>
</dbReference>
<dbReference type="PRINTS" id="PR00418">
    <property type="entry name" value="TPI2FAMILY"/>
</dbReference>
<dbReference type="SMART" id="SM00387">
    <property type="entry name" value="HATPase_c"/>
    <property type="match status" value="1"/>
</dbReference>
<dbReference type="SMART" id="SM00433">
    <property type="entry name" value="TOP2c"/>
    <property type="match status" value="1"/>
</dbReference>
<dbReference type="SUPFAM" id="SSF55874">
    <property type="entry name" value="ATPase domain of HSP90 chaperone/DNA topoisomerase II/histidine kinase"/>
    <property type="match status" value="1"/>
</dbReference>
<dbReference type="SUPFAM" id="SSF54211">
    <property type="entry name" value="Ribosomal protein S5 domain 2-like"/>
    <property type="match status" value="1"/>
</dbReference>
<dbReference type="SUPFAM" id="SSF56719">
    <property type="entry name" value="Type II DNA topoisomerase"/>
    <property type="match status" value="1"/>
</dbReference>
<dbReference type="PROSITE" id="PS00177">
    <property type="entry name" value="TOPOISOMERASE_II"/>
    <property type="match status" value="1"/>
</dbReference>
<dbReference type="PROSITE" id="PS50880">
    <property type="entry name" value="TOPRIM"/>
    <property type="match status" value="1"/>
</dbReference>
<keyword id="KW-0067">ATP-binding</keyword>
<keyword id="KW-0238">DNA-binding</keyword>
<keyword id="KW-0413">Isomerase</keyword>
<keyword id="KW-0460">Magnesium</keyword>
<keyword id="KW-0479">Metal-binding</keyword>
<keyword id="KW-0547">Nucleotide-binding</keyword>
<keyword id="KW-1185">Reference proteome</keyword>
<keyword id="KW-0799">Topoisomerase</keyword>